<evidence type="ECO:0000255" key="1">
    <source>
        <dbReference type="HAMAP-Rule" id="MF_00006"/>
    </source>
</evidence>
<sequence length="470" mass="49937">MSTNQGSLWGGRFAAGPSEALVALSKSTHFDWVLAPYDITASRAHTKMLFRAGLLNEEQRDGLLAGLDNLAEDVADGSFLPLVTDEDVHAALERGLIDRVGPDLGGRLRAGRSRNDQVATLFRMWLRDAVRRVAAGALEVVDALANQAAEHSSTIMPGKTHLQSAQPILLAHHLLAHAHPLLRDVGRIVDFDKRAAVSPYGSGALAGSSLGLDPDAMAQDLGFPAAADNSVDATAARDFAAEAAFVFAMIAVDLSRLAEDIILWSSTEFGYARLHDSWSTGSSIMPQKKNPDIAELARGKSGRLIGNLAGLLATLKAQPLAYNRDLQEDKEPVFDSVAQLELLLPAMAGLVASLTFNVERMAALAPAGYTLATDIAEWLVRQGVPFRSAHEAAGTAVRVAEGRGVGLEELTDDELAAISANLTPQVREVLTVEGSVSSRAARGGTAPSQAAKQLTVVRANANQLRQLLMR</sequence>
<protein>
    <recommendedName>
        <fullName evidence="1">Argininosuccinate lyase</fullName>
        <shortName evidence="1">ASAL</shortName>
        <ecNumber evidence="1">4.3.2.1</ecNumber>
    </recommendedName>
    <alternativeName>
        <fullName evidence="1">Arginosuccinase</fullName>
    </alternativeName>
</protein>
<dbReference type="EC" id="4.3.2.1" evidence="1"/>
<dbReference type="EMBL" id="AL583922">
    <property type="protein sequence ID" value="CAC30364.1"/>
    <property type="molecule type" value="Genomic_DNA"/>
</dbReference>
<dbReference type="PIR" id="G87085">
    <property type="entry name" value="G87085"/>
</dbReference>
<dbReference type="RefSeq" id="NP_302006.1">
    <property type="nucleotide sequence ID" value="NC_002677.1"/>
</dbReference>
<dbReference type="RefSeq" id="WP_010908327.1">
    <property type="nucleotide sequence ID" value="NC_002677.1"/>
</dbReference>
<dbReference type="SMR" id="Q9CC09"/>
<dbReference type="STRING" id="272631.gene:17575252"/>
<dbReference type="KEGG" id="mle:ML1413"/>
<dbReference type="PATRIC" id="fig|272631.5.peg.2618"/>
<dbReference type="Leproma" id="ML1413"/>
<dbReference type="eggNOG" id="COG0165">
    <property type="taxonomic scope" value="Bacteria"/>
</dbReference>
<dbReference type="HOGENOM" id="CLU_027272_2_2_11"/>
<dbReference type="OrthoDB" id="9769623at2"/>
<dbReference type="UniPathway" id="UPA00068">
    <property type="reaction ID" value="UER00114"/>
</dbReference>
<dbReference type="Proteomes" id="UP000000806">
    <property type="component" value="Chromosome"/>
</dbReference>
<dbReference type="GO" id="GO:0005829">
    <property type="term" value="C:cytosol"/>
    <property type="evidence" value="ECO:0007669"/>
    <property type="project" value="TreeGrafter"/>
</dbReference>
<dbReference type="GO" id="GO:0004056">
    <property type="term" value="F:argininosuccinate lyase activity"/>
    <property type="evidence" value="ECO:0007669"/>
    <property type="project" value="UniProtKB-UniRule"/>
</dbReference>
<dbReference type="GO" id="GO:0042450">
    <property type="term" value="P:arginine biosynthetic process via ornithine"/>
    <property type="evidence" value="ECO:0007669"/>
    <property type="project" value="InterPro"/>
</dbReference>
<dbReference type="GO" id="GO:0006526">
    <property type="term" value="P:L-arginine biosynthetic process"/>
    <property type="evidence" value="ECO:0007669"/>
    <property type="project" value="UniProtKB-UniRule"/>
</dbReference>
<dbReference type="CDD" id="cd01359">
    <property type="entry name" value="Argininosuccinate_lyase"/>
    <property type="match status" value="1"/>
</dbReference>
<dbReference type="FunFam" id="1.10.40.30:FF:000001">
    <property type="entry name" value="Argininosuccinate lyase"/>
    <property type="match status" value="1"/>
</dbReference>
<dbReference type="FunFam" id="1.20.200.10:FF:000015">
    <property type="entry name" value="argininosuccinate lyase isoform X2"/>
    <property type="match status" value="1"/>
</dbReference>
<dbReference type="Gene3D" id="1.10.40.30">
    <property type="entry name" value="Fumarase/aspartase (C-terminal domain)"/>
    <property type="match status" value="1"/>
</dbReference>
<dbReference type="Gene3D" id="1.20.200.10">
    <property type="entry name" value="Fumarase/aspartase (Central domain)"/>
    <property type="match status" value="1"/>
</dbReference>
<dbReference type="Gene3D" id="1.10.275.10">
    <property type="entry name" value="Fumarase/aspartase (N-terminal domain)"/>
    <property type="match status" value="1"/>
</dbReference>
<dbReference type="HAMAP" id="MF_00006">
    <property type="entry name" value="Arg_succ_lyase"/>
    <property type="match status" value="1"/>
</dbReference>
<dbReference type="InterPro" id="IPR029419">
    <property type="entry name" value="Arg_succ_lyase_C"/>
</dbReference>
<dbReference type="InterPro" id="IPR009049">
    <property type="entry name" value="Argininosuccinate_lyase"/>
</dbReference>
<dbReference type="InterPro" id="IPR024083">
    <property type="entry name" value="Fumarase/histidase_N"/>
</dbReference>
<dbReference type="InterPro" id="IPR020557">
    <property type="entry name" value="Fumarate_lyase_CS"/>
</dbReference>
<dbReference type="InterPro" id="IPR000362">
    <property type="entry name" value="Fumarate_lyase_fam"/>
</dbReference>
<dbReference type="InterPro" id="IPR022761">
    <property type="entry name" value="Fumarate_lyase_N"/>
</dbReference>
<dbReference type="InterPro" id="IPR008948">
    <property type="entry name" value="L-Aspartase-like"/>
</dbReference>
<dbReference type="NCBIfam" id="TIGR00838">
    <property type="entry name" value="argH"/>
    <property type="match status" value="1"/>
</dbReference>
<dbReference type="PANTHER" id="PTHR43814">
    <property type="entry name" value="ARGININOSUCCINATE LYASE"/>
    <property type="match status" value="1"/>
</dbReference>
<dbReference type="PANTHER" id="PTHR43814:SF1">
    <property type="entry name" value="ARGININOSUCCINATE LYASE"/>
    <property type="match status" value="1"/>
</dbReference>
<dbReference type="Pfam" id="PF14698">
    <property type="entry name" value="ASL_C2"/>
    <property type="match status" value="1"/>
</dbReference>
<dbReference type="Pfam" id="PF00206">
    <property type="entry name" value="Lyase_1"/>
    <property type="match status" value="1"/>
</dbReference>
<dbReference type="PRINTS" id="PR00145">
    <property type="entry name" value="ARGSUCLYASE"/>
</dbReference>
<dbReference type="PRINTS" id="PR00149">
    <property type="entry name" value="FUMRATELYASE"/>
</dbReference>
<dbReference type="SUPFAM" id="SSF48557">
    <property type="entry name" value="L-aspartase-like"/>
    <property type="match status" value="1"/>
</dbReference>
<dbReference type="PROSITE" id="PS00163">
    <property type="entry name" value="FUMARATE_LYASES"/>
    <property type="match status" value="1"/>
</dbReference>
<keyword id="KW-0028">Amino-acid biosynthesis</keyword>
<keyword id="KW-0055">Arginine biosynthesis</keyword>
<keyword id="KW-0963">Cytoplasm</keyword>
<keyword id="KW-0456">Lyase</keyword>
<keyword id="KW-1185">Reference proteome</keyword>
<name>ARLY_MYCLE</name>
<feature type="chain" id="PRO_0000137791" description="Argininosuccinate lyase">
    <location>
        <begin position="1"/>
        <end position="470"/>
    </location>
</feature>
<reference key="1">
    <citation type="journal article" date="2001" name="Nature">
        <title>Massive gene decay in the leprosy bacillus.</title>
        <authorList>
            <person name="Cole S.T."/>
            <person name="Eiglmeier K."/>
            <person name="Parkhill J."/>
            <person name="James K.D."/>
            <person name="Thomson N.R."/>
            <person name="Wheeler P.R."/>
            <person name="Honore N."/>
            <person name="Garnier T."/>
            <person name="Churcher C.M."/>
            <person name="Harris D.E."/>
            <person name="Mungall K.L."/>
            <person name="Basham D."/>
            <person name="Brown D."/>
            <person name="Chillingworth T."/>
            <person name="Connor R."/>
            <person name="Davies R.M."/>
            <person name="Devlin K."/>
            <person name="Duthoy S."/>
            <person name="Feltwell T."/>
            <person name="Fraser A."/>
            <person name="Hamlin N."/>
            <person name="Holroyd S."/>
            <person name="Hornsby T."/>
            <person name="Jagels K."/>
            <person name="Lacroix C."/>
            <person name="Maclean J."/>
            <person name="Moule S."/>
            <person name="Murphy L.D."/>
            <person name="Oliver K."/>
            <person name="Quail M.A."/>
            <person name="Rajandream M.A."/>
            <person name="Rutherford K.M."/>
            <person name="Rutter S."/>
            <person name="Seeger K."/>
            <person name="Simon S."/>
            <person name="Simmonds M."/>
            <person name="Skelton J."/>
            <person name="Squares R."/>
            <person name="Squares S."/>
            <person name="Stevens K."/>
            <person name="Taylor K."/>
            <person name="Whitehead S."/>
            <person name="Woodward J.R."/>
            <person name="Barrell B.G."/>
        </authorList>
    </citation>
    <scope>NUCLEOTIDE SEQUENCE [LARGE SCALE GENOMIC DNA]</scope>
    <source>
        <strain>TN</strain>
    </source>
</reference>
<accession>Q9CC09</accession>
<gene>
    <name evidence="1" type="primary">argH</name>
    <name type="ordered locus">ML1413</name>
</gene>
<comment type="catalytic activity">
    <reaction evidence="1">
        <text>2-(N(omega)-L-arginino)succinate = fumarate + L-arginine</text>
        <dbReference type="Rhea" id="RHEA:24020"/>
        <dbReference type="ChEBI" id="CHEBI:29806"/>
        <dbReference type="ChEBI" id="CHEBI:32682"/>
        <dbReference type="ChEBI" id="CHEBI:57472"/>
        <dbReference type="EC" id="4.3.2.1"/>
    </reaction>
</comment>
<comment type="pathway">
    <text evidence="1">Amino-acid biosynthesis; L-arginine biosynthesis; L-arginine from L-ornithine and carbamoyl phosphate: step 3/3.</text>
</comment>
<comment type="subcellular location">
    <subcellularLocation>
        <location evidence="1">Cytoplasm</location>
    </subcellularLocation>
</comment>
<comment type="similarity">
    <text evidence="1">Belongs to the lyase 1 family. Argininosuccinate lyase subfamily.</text>
</comment>
<organism>
    <name type="scientific">Mycobacterium leprae (strain TN)</name>
    <dbReference type="NCBI Taxonomy" id="272631"/>
    <lineage>
        <taxon>Bacteria</taxon>
        <taxon>Bacillati</taxon>
        <taxon>Actinomycetota</taxon>
        <taxon>Actinomycetes</taxon>
        <taxon>Mycobacteriales</taxon>
        <taxon>Mycobacteriaceae</taxon>
        <taxon>Mycobacterium</taxon>
    </lineage>
</organism>
<proteinExistence type="inferred from homology"/>